<evidence type="ECO:0000255" key="1">
    <source>
        <dbReference type="HAMAP-Rule" id="MF_01212"/>
    </source>
</evidence>
<evidence type="ECO:0000255" key="2">
    <source>
        <dbReference type="PROSITE-ProRule" id="PRU01175"/>
    </source>
</evidence>
<gene>
    <name type="ordered locus">azo3643</name>
</gene>
<organism>
    <name type="scientific">Azoarcus sp. (strain BH72)</name>
    <dbReference type="NCBI Taxonomy" id="418699"/>
    <lineage>
        <taxon>Bacteria</taxon>
        <taxon>Pseudomonadati</taxon>
        <taxon>Pseudomonadota</taxon>
        <taxon>Betaproteobacteria</taxon>
        <taxon>Rhodocyclales</taxon>
        <taxon>Zoogloeaceae</taxon>
        <taxon>Azoarcus</taxon>
    </lineage>
</organism>
<name>DGTL1_AZOSB</name>
<comment type="similarity">
    <text evidence="1">Belongs to the dGTPase family. Type 2 subfamily.</text>
</comment>
<accession>A1KBQ3</accession>
<reference key="1">
    <citation type="journal article" date="2006" name="Nat. Biotechnol.">
        <title>Complete genome of the mutualistic, N2-fixing grass endophyte Azoarcus sp. strain BH72.</title>
        <authorList>
            <person name="Krause A."/>
            <person name="Ramakumar A."/>
            <person name="Bartels D."/>
            <person name="Battistoni F."/>
            <person name="Bekel T."/>
            <person name="Boch J."/>
            <person name="Boehm M."/>
            <person name="Friedrich F."/>
            <person name="Hurek T."/>
            <person name="Krause L."/>
            <person name="Linke B."/>
            <person name="McHardy A.C."/>
            <person name="Sarkar A."/>
            <person name="Schneiker S."/>
            <person name="Syed A.A."/>
            <person name="Thauer R."/>
            <person name="Vorhoelter F.-J."/>
            <person name="Weidner S."/>
            <person name="Puehler A."/>
            <person name="Reinhold-Hurek B."/>
            <person name="Kaiser O."/>
            <person name="Goesmann A."/>
        </authorList>
    </citation>
    <scope>NUCLEOTIDE SEQUENCE [LARGE SCALE GENOMIC DNA]</scope>
    <source>
        <strain>BH72</strain>
    </source>
</reference>
<keyword id="KW-0378">Hydrolase</keyword>
<keyword id="KW-1185">Reference proteome</keyword>
<dbReference type="EMBL" id="AM406670">
    <property type="protein sequence ID" value="CAL96259.1"/>
    <property type="molecule type" value="Genomic_DNA"/>
</dbReference>
<dbReference type="RefSeq" id="WP_011767365.1">
    <property type="nucleotide sequence ID" value="NC_008702.1"/>
</dbReference>
<dbReference type="SMR" id="A1KBQ3"/>
<dbReference type="STRING" id="62928.azo3643"/>
<dbReference type="KEGG" id="azo:azo3643"/>
<dbReference type="eggNOG" id="COG0232">
    <property type="taxonomic scope" value="Bacteria"/>
</dbReference>
<dbReference type="HOGENOM" id="CLU_028163_1_0_4"/>
<dbReference type="Proteomes" id="UP000002588">
    <property type="component" value="Chromosome"/>
</dbReference>
<dbReference type="GO" id="GO:0008832">
    <property type="term" value="F:dGTPase activity"/>
    <property type="evidence" value="ECO:0007669"/>
    <property type="project" value="TreeGrafter"/>
</dbReference>
<dbReference type="GO" id="GO:0006203">
    <property type="term" value="P:dGTP catabolic process"/>
    <property type="evidence" value="ECO:0007669"/>
    <property type="project" value="TreeGrafter"/>
</dbReference>
<dbReference type="CDD" id="cd00077">
    <property type="entry name" value="HDc"/>
    <property type="match status" value="1"/>
</dbReference>
<dbReference type="Gene3D" id="1.10.3210.10">
    <property type="entry name" value="Hypothetical protein af1432"/>
    <property type="match status" value="1"/>
</dbReference>
<dbReference type="HAMAP" id="MF_01212">
    <property type="entry name" value="dGTPase_type2"/>
    <property type="match status" value="1"/>
</dbReference>
<dbReference type="InterPro" id="IPR006261">
    <property type="entry name" value="dGTPase"/>
</dbReference>
<dbReference type="InterPro" id="IPR050135">
    <property type="entry name" value="dGTPase-like"/>
</dbReference>
<dbReference type="InterPro" id="IPR023023">
    <property type="entry name" value="dNTPase_2"/>
</dbReference>
<dbReference type="InterPro" id="IPR003607">
    <property type="entry name" value="HD/PDEase_dom"/>
</dbReference>
<dbReference type="InterPro" id="IPR006674">
    <property type="entry name" value="HD_domain"/>
</dbReference>
<dbReference type="InterPro" id="IPR026875">
    <property type="entry name" value="PHydrolase_assoc_dom"/>
</dbReference>
<dbReference type="NCBIfam" id="TIGR01353">
    <property type="entry name" value="dGTP_triPase"/>
    <property type="match status" value="1"/>
</dbReference>
<dbReference type="NCBIfam" id="NF002326">
    <property type="entry name" value="PRK01286.1-1"/>
    <property type="match status" value="1"/>
</dbReference>
<dbReference type="PANTHER" id="PTHR11373:SF43">
    <property type="entry name" value="DEOXYGUANOSINETRIPHOSPHATE TRIPHOSPHOHYDROLASE-LIKE PROTEIN"/>
    <property type="match status" value="1"/>
</dbReference>
<dbReference type="PANTHER" id="PTHR11373">
    <property type="entry name" value="DEOXYNUCLEOSIDE TRIPHOSPHATE TRIPHOSPHOHYDROLASE"/>
    <property type="match status" value="1"/>
</dbReference>
<dbReference type="Pfam" id="PF01966">
    <property type="entry name" value="HD"/>
    <property type="match status" value="1"/>
</dbReference>
<dbReference type="Pfam" id="PF13286">
    <property type="entry name" value="HD_assoc"/>
    <property type="match status" value="1"/>
</dbReference>
<dbReference type="SMART" id="SM00471">
    <property type="entry name" value="HDc"/>
    <property type="match status" value="1"/>
</dbReference>
<dbReference type="SUPFAM" id="SSF109604">
    <property type="entry name" value="HD-domain/PDEase-like"/>
    <property type="match status" value="1"/>
</dbReference>
<dbReference type="PROSITE" id="PS51831">
    <property type="entry name" value="HD"/>
    <property type="match status" value="1"/>
</dbReference>
<proteinExistence type="inferred from homology"/>
<sequence>MRVKDAVELASYAVSEAVSRGRVHPEAAPRERGEFQRDRDRIVHSTAFRRLEYKTQVFVNHEGDLFRTRLTHTIEVAQLTRSLARALGLNEDLAEAIALAHDLGHTPFGHAGQDALHACMKDYGGFEHNLQSLRTVELLEDRYAAFDGLNLLFETREGILKHCSRPNAEKLGELGARFLNGTQPSLEAQLANLADEIAYSNHDVDDGLRSGLITLEQLDSIDVFAEHRRAVQSRWPGLAGRKLISETVRSMVNAMALDLIAQTRANIADAGVRTVDDVRAGPRLVAYSSSLQPRLRALKGFLRENLYWHYQVLRMTDKARRIIGDLFGAFMADPRLLPPQYQEKARTDKPRAIADYIAGMTDRYAMKEHRRLFAVGEIH</sequence>
<protein>
    <recommendedName>
        <fullName evidence="1">Deoxyguanosinetriphosphate triphosphohydrolase-like protein</fullName>
    </recommendedName>
</protein>
<feature type="chain" id="PRO_1000066410" description="Deoxyguanosinetriphosphate triphosphohydrolase-like protein">
    <location>
        <begin position="1"/>
        <end position="379"/>
    </location>
</feature>
<feature type="domain" description="HD" evidence="2">
    <location>
        <begin position="69"/>
        <end position="200"/>
    </location>
</feature>